<dbReference type="EMBL" id="U22047">
    <property type="protein sequence ID" value="AAA64575.1"/>
    <property type="molecule type" value="Genomic_DNA"/>
</dbReference>
<dbReference type="SMR" id="Q74119"/>
<dbReference type="PRO" id="PR:Q74119"/>
<dbReference type="Proteomes" id="UP000007425">
    <property type="component" value="Segment"/>
</dbReference>
<dbReference type="GO" id="GO:0042025">
    <property type="term" value="C:host cell nucleus"/>
    <property type="evidence" value="ECO:0007669"/>
    <property type="project" value="UniProtKB-SubCell"/>
</dbReference>
<dbReference type="GO" id="GO:0020002">
    <property type="term" value="C:host cell plasma membrane"/>
    <property type="evidence" value="ECO:0007669"/>
    <property type="project" value="UniProtKB-SubCell"/>
</dbReference>
<dbReference type="GO" id="GO:0072494">
    <property type="term" value="C:host multivesicular body"/>
    <property type="evidence" value="ECO:0007669"/>
    <property type="project" value="UniProtKB-SubCell"/>
</dbReference>
<dbReference type="GO" id="GO:0016020">
    <property type="term" value="C:membrane"/>
    <property type="evidence" value="ECO:0007669"/>
    <property type="project" value="UniProtKB-KW"/>
</dbReference>
<dbReference type="GO" id="GO:0019013">
    <property type="term" value="C:viral nucleocapsid"/>
    <property type="evidence" value="ECO:0007669"/>
    <property type="project" value="UniProtKB-KW"/>
</dbReference>
<dbReference type="GO" id="GO:0055036">
    <property type="term" value="C:virion membrane"/>
    <property type="evidence" value="ECO:0007669"/>
    <property type="project" value="UniProtKB-SubCell"/>
</dbReference>
<dbReference type="GO" id="GO:0003723">
    <property type="term" value="F:RNA binding"/>
    <property type="evidence" value="ECO:0007669"/>
    <property type="project" value="UniProtKB-KW"/>
</dbReference>
<dbReference type="GO" id="GO:0005198">
    <property type="term" value="F:structural molecule activity"/>
    <property type="evidence" value="ECO:0007669"/>
    <property type="project" value="InterPro"/>
</dbReference>
<dbReference type="GO" id="GO:0008270">
    <property type="term" value="F:zinc ion binding"/>
    <property type="evidence" value="ECO:0007669"/>
    <property type="project" value="UniProtKB-KW"/>
</dbReference>
<dbReference type="GO" id="GO:0039702">
    <property type="term" value="P:viral budding via host ESCRT complex"/>
    <property type="evidence" value="ECO:0007669"/>
    <property type="project" value="UniProtKB-KW"/>
</dbReference>
<dbReference type="GO" id="GO:0075523">
    <property type="term" value="P:viral translational frameshifting"/>
    <property type="evidence" value="ECO:0007669"/>
    <property type="project" value="UniProtKB-KW"/>
</dbReference>
<dbReference type="Gene3D" id="1.10.1200.30">
    <property type="match status" value="1"/>
</dbReference>
<dbReference type="Gene3D" id="1.10.375.10">
    <property type="entry name" value="Human Immunodeficiency Virus Type 1 Capsid Protein"/>
    <property type="match status" value="1"/>
</dbReference>
<dbReference type="Gene3D" id="1.10.150.90">
    <property type="entry name" value="Immunodeficiency lentiviruses, gag gene matrix protein p17"/>
    <property type="match status" value="1"/>
</dbReference>
<dbReference type="Gene3D" id="1.20.5.760">
    <property type="entry name" value="Single helix bin"/>
    <property type="match status" value="1"/>
</dbReference>
<dbReference type="Gene3D" id="4.10.60.10">
    <property type="entry name" value="Zinc finger, CCHC-type"/>
    <property type="match status" value="1"/>
</dbReference>
<dbReference type="InterPro" id="IPR045345">
    <property type="entry name" value="Gag_p24_C"/>
</dbReference>
<dbReference type="InterPro" id="IPR000071">
    <property type="entry name" value="Lentvrl_matrix_N"/>
</dbReference>
<dbReference type="InterPro" id="IPR012344">
    <property type="entry name" value="Matrix_HIV/RSV_N"/>
</dbReference>
<dbReference type="InterPro" id="IPR050195">
    <property type="entry name" value="Primate_lentivir_Gag_pol-like"/>
</dbReference>
<dbReference type="InterPro" id="IPR008916">
    <property type="entry name" value="Retrov_capsid_C"/>
</dbReference>
<dbReference type="InterPro" id="IPR008919">
    <property type="entry name" value="Retrov_capsid_N"/>
</dbReference>
<dbReference type="InterPro" id="IPR010999">
    <property type="entry name" value="Retrovr_matrix"/>
</dbReference>
<dbReference type="InterPro" id="IPR001878">
    <property type="entry name" value="Znf_CCHC"/>
</dbReference>
<dbReference type="InterPro" id="IPR036875">
    <property type="entry name" value="Znf_CCHC_sf"/>
</dbReference>
<dbReference type="PANTHER" id="PTHR40389">
    <property type="entry name" value="ENDOGENOUS RETROVIRUS GROUP K MEMBER 24 GAG POLYPROTEIN-RELATED"/>
    <property type="match status" value="1"/>
</dbReference>
<dbReference type="PANTHER" id="PTHR40389:SF2">
    <property type="entry name" value="ENDOGENOUS RETROVIRUS GROUP K MEMBER 24 GAG POLYPROTEIN-RELATED"/>
    <property type="match status" value="1"/>
</dbReference>
<dbReference type="Pfam" id="PF00540">
    <property type="entry name" value="Gag_p17"/>
    <property type="match status" value="1"/>
</dbReference>
<dbReference type="Pfam" id="PF00607">
    <property type="entry name" value="Gag_p24"/>
    <property type="match status" value="1"/>
</dbReference>
<dbReference type="Pfam" id="PF19317">
    <property type="entry name" value="Gag_p24_C"/>
    <property type="match status" value="1"/>
</dbReference>
<dbReference type="Pfam" id="PF00098">
    <property type="entry name" value="zf-CCHC"/>
    <property type="match status" value="2"/>
</dbReference>
<dbReference type="PRINTS" id="PR00234">
    <property type="entry name" value="HIV1MATRIX"/>
</dbReference>
<dbReference type="SMART" id="SM00343">
    <property type="entry name" value="ZnF_C2HC"/>
    <property type="match status" value="2"/>
</dbReference>
<dbReference type="SUPFAM" id="SSF47836">
    <property type="entry name" value="Retroviral matrix proteins"/>
    <property type="match status" value="1"/>
</dbReference>
<dbReference type="SUPFAM" id="SSF47353">
    <property type="entry name" value="Retrovirus capsid dimerization domain-like"/>
    <property type="match status" value="1"/>
</dbReference>
<dbReference type="SUPFAM" id="SSF47943">
    <property type="entry name" value="Retrovirus capsid protein, N-terminal core domain"/>
    <property type="match status" value="1"/>
</dbReference>
<dbReference type="SUPFAM" id="SSF57756">
    <property type="entry name" value="Retrovirus zinc finger-like domains"/>
    <property type="match status" value="1"/>
</dbReference>
<dbReference type="PROSITE" id="PS50158">
    <property type="entry name" value="ZF_CCHC"/>
    <property type="match status" value="2"/>
</dbReference>
<protein>
    <recommendedName>
        <fullName>Gag polyprotein</fullName>
    </recommendedName>
    <alternativeName>
        <fullName>Pr55Gag</fullName>
    </alternativeName>
    <component>
        <recommendedName>
            <fullName>Matrix protein p17</fullName>
            <shortName>MA</shortName>
        </recommendedName>
    </component>
    <component>
        <recommendedName>
            <fullName>Capsid protein p24</fullName>
            <shortName>CA</shortName>
        </recommendedName>
    </component>
    <component>
        <recommendedName>
            <fullName evidence="6">Spacer peptide 1</fullName>
            <shortName>SP1</shortName>
        </recommendedName>
        <alternativeName>
            <fullName>p2</fullName>
        </alternativeName>
    </component>
    <component>
        <recommendedName>
            <fullName>Nucleocapsid protein p7</fullName>
            <shortName>NC</shortName>
        </recommendedName>
    </component>
    <component>
        <recommendedName>
            <fullName evidence="6">Spacer peptide 2</fullName>
            <shortName>SP2</shortName>
        </recommendedName>
        <alternativeName>
            <fullName>p1</fullName>
        </alternativeName>
    </component>
    <component>
        <recommendedName>
            <fullName>p6-gag</fullName>
        </recommendedName>
    </component>
</protein>
<organismHost>
    <name type="scientific">Homo sapiens</name>
    <name type="common">Human</name>
    <dbReference type="NCBI Taxonomy" id="9606"/>
</organismHost>
<accession>Q74119</accession>
<name>GAG_HV2KR</name>
<sequence>MGARSSVLRGKKVDELEKIRLRPGGKKKYRLKHIVWAANELGKFGLAESLLESKEGCQKIITVLDPLVPTGSENLKSLFNTVCVIWCLHAEEKVKDTEGAKQIVQRHLVAETGTADKMPSTSRPAAPPSGRGGNYPVQQIAGNYSHVPLSPRTLNAWVKLVEEKKFGAEVVPGFQALSEGCTPYDINQMLNCVGDHQAAMQIIREIINEEAADWDVQHPIPGPLPAGQLREPRGSDIAGTTSTVEEQIQWMFRAQNPIPVGNIYRRWIQIGLQKCVRMYNPTNILDVKQGPKEPFQSYVDRFYKSLRAEQTDPAVKNWMTQTLLVQNANPDCKLVLKGLGMNPTLEEMLTACQGIGGPGQKARLMAEALKEALAPAPIPFAAAQQRRTIKCWNCGKDGHSARQCRAPRRQGCWKCGKSGHVMANCPERQAGFLGIGPWGKKPRNFPVTRVPQGLTPTAPPADPAADLLEKYLQQGRKQKEQKMRPYKEVTEDLLHLEQGETPHKEATEDLLHLNSLFGKDQ</sequence>
<evidence type="ECO:0000250" key="1"/>
<evidence type="ECO:0000250" key="2">
    <source>
        <dbReference type="UniProtKB" id="P03347"/>
    </source>
</evidence>
<evidence type="ECO:0000250" key="3">
    <source>
        <dbReference type="UniProtKB" id="P03348"/>
    </source>
</evidence>
<evidence type="ECO:0000250" key="4">
    <source>
        <dbReference type="UniProtKB" id="P03349"/>
    </source>
</evidence>
<evidence type="ECO:0000250" key="5">
    <source>
        <dbReference type="UniProtKB" id="P04591"/>
    </source>
</evidence>
<evidence type="ECO:0000250" key="6">
    <source>
        <dbReference type="UniProtKB" id="P12493"/>
    </source>
</evidence>
<evidence type="ECO:0000250" key="7">
    <source>
        <dbReference type="UniProtKB" id="P12497"/>
    </source>
</evidence>
<evidence type="ECO:0000250" key="8">
    <source>
        <dbReference type="UniProtKB" id="P18095"/>
    </source>
</evidence>
<evidence type="ECO:0000255" key="9">
    <source>
        <dbReference type="PROSITE-ProRule" id="PRU00047"/>
    </source>
</evidence>
<evidence type="ECO:0000256" key="10">
    <source>
        <dbReference type="SAM" id="MobiDB-lite"/>
    </source>
</evidence>
<evidence type="ECO:0000305" key="11"/>
<proteinExistence type="inferred from homology"/>
<gene>
    <name type="primary">gag</name>
</gene>
<feature type="initiator methionine" description="Removed; by host" evidence="1">
    <location>
        <position position="1"/>
    </location>
</feature>
<feature type="chain" id="PRO_0000261246" description="Gag polyprotein">
    <location>
        <begin position="2"/>
        <end position="521"/>
    </location>
</feature>
<feature type="chain" id="PRO_0000038609" description="Matrix protein p17" evidence="1">
    <location>
        <begin position="2"/>
        <end position="135"/>
    </location>
</feature>
<feature type="chain" id="PRO_0000038610" description="Capsid protein p24" evidence="1">
    <location>
        <begin position="136"/>
        <end position="365"/>
    </location>
</feature>
<feature type="peptide" id="PRO_0000042079" description="Spacer peptide 1" evidence="1">
    <location>
        <begin position="366"/>
        <end position="382"/>
    </location>
</feature>
<feature type="chain" id="PRO_0000042080" description="Nucleocapsid protein p7" evidence="1">
    <location>
        <begin position="383"/>
        <end position="431"/>
    </location>
</feature>
<feature type="peptide" id="PRO_0000042081" description="Spacer peptide 2" evidence="1">
    <location>
        <begin position="432"/>
        <end position="445"/>
    </location>
</feature>
<feature type="chain" id="PRO_0000042082" description="p6-gag" evidence="1">
    <location>
        <begin position="446"/>
        <end position="521"/>
    </location>
</feature>
<feature type="zinc finger region" description="CCHC-type 1" evidence="9">
    <location>
        <begin position="389"/>
        <end position="406"/>
    </location>
</feature>
<feature type="zinc finger region" description="CCHC-type 2" evidence="9">
    <location>
        <begin position="410"/>
        <end position="427"/>
    </location>
</feature>
<feature type="region of interest" description="Interaction with Gp41" evidence="6">
    <location>
        <begin position="7"/>
        <end position="31"/>
    </location>
</feature>
<feature type="region of interest" description="Interaction with host CALM1" evidence="5">
    <location>
        <begin position="8"/>
        <end position="43"/>
    </location>
</feature>
<feature type="region of interest" description="Interaction with host AP3D1" evidence="7">
    <location>
        <begin position="12"/>
        <end position="19"/>
    </location>
</feature>
<feature type="region of interest" description="Interaction with membrane phosphatidylinositol 4,5-bisphosphate and RNA" evidence="6">
    <location>
        <begin position="14"/>
        <end position="33"/>
    </location>
</feature>
<feature type="region of interest" description="Interaction with membrane phosphatidylinositol 4,5-bisphosphate" evidence="6">
    <location>
        <begin position="73"/>
        <end position="77"/>
    </location>
</feature>
<feature type="region of interest" description="Disordered" evidence="10">
    <location>
        <begin position="111"/>
        <end position="137"/>
    </location>
</feature>
<feature type="region of interest" description="Interaction with host PPIA/CYPA and NUP153" evidence="6">
    <location>
        <begin position="191"/>
        <end position="228"/>
    </location>
</feature>
<feature type="region of interest" description="PPIA/CYPA-binding loop" evidence="5">
    <location>
        <begin position="219"/>
        <end position="226"/>
    </location>
</feature>
<feature type="region of interest" description="Dimerization/Multimerization of capsid protein p24" evidence="5">
    <location>
        <begin position="279"/>
        <end position="365"/>
    </location>
</feature>
<feature type="short sequence motif" description="Nuclear export signal" evidence="1">
    <location>
        <begin position="16"/>
        <end position="22"/>
    </location>
</feature>
<feature type="short sequence motif" description="Nuclear localization signal" evidence="1">
    <location>
        <begin position="26"/>
        <end position="32"/>
    </location>
</feature>
<feature type="short sequence motif" description="PTAP/PSAP motif">
    <location>
        <begin position="456"/>
        <end position="459"/>
    </location>
</feature>
<feature type="site" description="Cleavage; by viral protease" evidence="1">
    <location>
        <begin position="135"/>
        <end position="136"/>
    </location>
</feature>
<feature type="site" description="Cleavage; by viral protease" evidence="1">
    <location>
        <begin position="365"/>
        <end position="366"/>
    </location>
</feature>
<feature type="site" description="Cleavage; by viral protease" evidence="1">
    <location>
        <begin position="382"/>
        <end position="383"/>
    </location>
</feature>
<feature type="site" description="Cleavage; by viral protease" evidence="1">
    <location>
        <begin position="431"/>
        <end position="432"/>
    </location>
</feature>
<feature type="site" description="Cleavage; by viral protease" evidence="1">
    <location>
        <begin position="445"/>
        <end position="446"/>
    </location>
</feature>
<feature type="modified residue" description="Phosphoserine; by host MAPK1" evidence="6">
    <location>
        <position position="150"/>
    </location>
</feature>
<feature type="lipid moiety-binding region" description="N-myristoyl glycine; by host" evidence="1">
    <location>
        <position position="2"/>
    </location>
</feature>
<comment type="function">
    <molecule>Gag polyprotein</molecule>
    <text evidence="5">Mediates, with Gag-Pol polyprotein, the essential events in virion assembly, including binding the plasma membrane, making the protein-protein interactions necessary to create spherical particles, recruiting the viral Env proteins, and packaging the genomic RNA via direct interactions with the RNA packaging sequence (Psi).</text>
</comment>
<comment type="function">
    <molecule>Matrix protein p17</molecule>
    <text evidence="1 6">Targets the polyprotein to the plasma membrane via a multipartite membrane-binding signal, that includes its myristoylated N-terminus (By similarity). Matrix protein is part of the pre-integration complex. Implicated in the release from host cell mediated by Vpu. Binds to RNA (By similarity).</text>
</comment>
<comment type="function">
    <molecule>Capsid protein p24</molecule>
    <text evidence="5 6 8">Forms the conical core that encapsulates the genomic RNA-nucleocapsid complex in the virion (By similarity). Most core are conical, with only 7% tubular (By similarity). The core is constituted by capsid protein hexamer subunits (By similarity). The core is disassembled soon after virion entry (By similarity). Host restriction factors such as TRIM5-alpha or TRIMCyp bind retroviral capsids and cause premature capsid disassembly, leading to blocks in reverse transcription (By similarity). Capsid restriction by TRIM5 is one of the factors which restricts HIV-1 to the human species (By similarity). Host PIN1 apparently facilitates the virion uncoating (By similarity). On the other hand, interactions with PDZD8 or CYPA stabilize the capsid (By similarity). The capsid interacts with high affinity with human NONO, promoting detection of viral DNA by CGAS, leading to CGAS-mediated inmmune activation (By similarity).</text>
</comment>
<comment type="function">
    <molecule>Nucleocapsid protein p7</molecule>
    <text evidence="5">Encapsulates and protects viral dimeric unspliced genomic RNA (gRNA). Binds these RNAs through its zinc fingers. Acts as a nucleic acid chaperone which is involved in rearangement of nucleic acid secondary structure during gRNA retrotranscription. Also facilitates template switch leading to recombination. As part of the polyprotein, participates in gRNA dimerization, packaging, tRNA incorporation and virion assembly.</text>
</comment>
<comment type="function">
    <molecule>p6-gag</molecule>
    <text evidence="6">Plays a role in budding of the assembled particle by interacting with the host class E VPS proteins TSG101 and PDCD6IP/AIP1.</text>
</comment>
<comment type="subunit">
    <molecule>Gag polyprotein</molecule>
    <text evidence="4 5">Homotrimer; further assembles as hexamers of trimers. Oligomerization possibly creates a central hole into which the cytoplasmic tail of the gp41 envelope protein may be inserted. Interacts with host TRIM22; this interaction seems to disrupt proper trafficking of Gag polyprotein and may interfere with budding. Interacts with host PDZD8. When ubiquitinated, interacts (via p6-gag domain) with host PACSIN2; this interaction allows PACSIN2 recruitment to viral assembly sites and its subsequent incorporation into virions (By similarity).</text>
</comment>
<comment type="subunit">
    <molecule>Matrix protein p17</molecule>
    <text evidence="5 6">Homotrimer; further assembles as hexamers of trimers. Interacts with gp41 (via C-terminus). Interacts with host CALM1; this interaction induces a conformational change in the Matrix protein, triggering exposure of the myristate group. Interacts with host AP3D1; this interaction allows the polyprotein trafficking to multivesicular bodies during virus assembly. Part of the pre-integration complex (PIC) which is composed of viral genome, matrix protein, Vpr and integrase.</text>
</comment>
<comment type="subunit">
    <molecule>Capsid protein p24</molecule>
    <text evidence="5 6 8">Homodimer; the homodimer further multimerizes as homohexamers or homopentamers (By similarity). Interacts with host NUP98 (By similarity). Interacts with host PPIA/CYPA; this interaction stabilizes the capsid (By similarity). Interacts with host NUP153 (By similarity). Interacts with host PDZD8; this interaction stabilizes the capsid. Interacts with host TRIM5; this interaction destabilizes the capsid (By similarity). Interacts with host CPSF6 (By similarity). Interacts with host NONO; the interaction is the interaction is strong and promotes CGAS-mediated immunity (By similarity).</text>
</comment>
<comment type="subunit">
    <molecule>Nucleocapsid protein p7</molecule>
    <text evidence="6">Interacts with host NUP98.</text>
</comment>
<comment type="subunit">
    <molecule>p6-gag</molecule>
    <text evidence="3 6">Interacts with Vpr; this interaction allows Vpr incorporation into the virion. Interacts with host TSG101. p6-gag interacts with host PDCD6IP/AIP1.</text>
</comment>
<comment type="subcellular location">
    <molecule>Gag polyprotein</molecule>
    <subcellularLocation>
        <location evidence="6">Host cell membrane</location>
        <topology evidence="6">Lipid-anchor</topology>
    </subcellularLocation>
    <subcellularLocation>
        <location evidence="6">Host endosome</location>
        <location evidence="6">Host multivesicular body</location>
    </subcellularLocation>
    <text evidence="6">These locations are probably linked to virus assembly sites. The main location is the cell membrane, but under some circumstances, late endosomal compartments can serve as productive sites for virion assembly.</text>
</comment>
<comment type="subcellular location">
    <molecule>Matrix protein p17</molecule>
    <subcellularLocation>
        <location evidence="6">Virion membrane</location>
        <topology evidence="6">Lipid-anchor</topology>
    </subcellularLocation>
    <subcellularLocation>
        <location evidence="1">Host nucleus</location>
    </subcellularLocation>
    <subcellularLocation>
        <location evidence="1">Host cytoplasm</location>
    </subcellularLocation>
</comment>
<comment type="subcellular location">
    <molecule>Capsid protein p24</molecule>
    <subcellularLocation>
        <location evidence="6">Virion</location>
    </subcellularLocation>
</comment>
<comment type="subcellular location">
    <molecule>Nucleocapsid protein p7</molecule>
    <subcellularLocation>
        <location evidence="6">Virion</location>
    </subcellularLocation>
</comment>
<comment type="alternative products">
    <event type="ribosomal frameshifting"/>
    <isoform>
        <id>Q74119-1</id>
        <name>Gag polyprotein</name>
        <sequence type="displayed"/>
    </isoform>
    <isoform>
        <id>Q74120-1</id>
        <name>Gag-Pol polyprotein</name>
        <sequence type="external"/>
    </isoform>
    <text>Translation results in the formation of the Gag polyprotein most of the time. Ribosomal frameshifting at the gag-pol genes boundary occurs at low frequency and produces the Gag-Pol polyprotein. This strategy of translation probably allows the virus to modulate the quantity of each viral protein. Maintenance of a correct Gag to Gag-Pol ratio is essential for RNA dimerization and viral infectivity.</text>
</comment>
<comment type="domain">
    <text evidence="1">Late-budding domains (L domains) are short sequence motifs essential for viral particle budding. They recruit proteins of the host ESCRT machinery (Endosomal Sorting Complex Required for Transport) or ESCRT-associated proteins. p6-gag contains one L domains: a PTAP/PSAP motif, which interacts with the UEV domain of TSG101 (By similarity).</text>
</comment>
<comment type="PTM">
    <text evidence="6">Gag-Pol polyprotein: Specific enzymatic cleavages by the viral protease yield mature proteins.</text>
</comment>
<comment type="PTM">
    <molecule>Matrix protein p17</molecule>
    <text evidence="5">Tyrosine phosphorylated presumably in the virion by a host kinase. Phosphorylation is apparently not a major regulator of membrane association.</text>
</comment>
<comment type="PTM">
    <text evidence="6">Capsid protein p24 is phosphorylated possibly by host MAPK1; this phosphorylation is necessary for Pin1-mediated virion uncoating.</text>
</comment>
<comment type="PTM">
    <text evidence="2">Nucleocapsid protein p7 is methylated by host PRMT6, impairing its function by reducing RNA annealing and the initiation of reverse transcription.</text>
</comment>
<comment type="miscellaneous">
    <molecule>Isoform Gag polyprotein</molecule>
    <text>Produced by conventional translation.</text>
</comment>
<comment type="similarity">
    <text evidence="11">Belongs to the primate lentivirus group gag polyprotein family.</text>
</comment>
<reference key="1">
    <citation type="submission" date="1995-04" db="EMBL/GenBank/DDBJ databases">
        <authorList>
            <person name="Kraus G.K."/>
            <person name="Talbott R."/>
            <person name="Leavitt M."/>
            <person name="Luznick L."/>
            <person name="Schmidt A."/>
            <person name="Badel P."/>
            <person name="Bartz C."/>
            <person name="Morton W."/>
            <person name="Wong-Staal F."/>
            <person name="Looney D.J."/>
        </authorList>
    </citation>
    <scope>NUCLEOTIDE SEQUENCE [GENOMIC DNA]</scope>
</reference>
<keyword id="KW-0014">AIDS</keyword>
<keyword id="KW-0167">Capsid protein</keyword>
<keyword id="KW-1032">Host cell membrane</keyword>
<keyword id="KW-1035">Host cytoplasm</keyword>
<keyword id="KW-1039">Host endosome</keyword>
<keyword id="KW-1043">Host membrane</keyword>
<keyword id="KW-1048">Host nucleus</keyword>
<keyword id="KW-0945">Host-virus interaction</keyword>
<keyword id="KW-0449">Lipoprotein</keyword>
<keyword id="KW-0472">Membrane</keyword>
<keyword id="KW-0479">Metal-binding</keyword>
<keyword id="KW-0519">Myristate</keyword>
<keyword id="KW-0597">Phosphoprotein</keyword>
<keyword id="KW-0677">Repeat</keyword>
<keyword id="KW-0688">Ribosomal frameshifting</keyword>
<keyword id="KW-0694">RNA-binding</keyword>
<keyword id="KW-1198">Viral budding</keyword>
<keyword id="KW-1187">Viral budding via the host ESCRT complexes</keyword>
<keyword id="KW-0543">Viral nucleoprotein</keyword>
<keyword id="KW-1188">Viral release from host cell</keyword>
<keyword id="KW-0946">Virion</keyword>
<keyword id="KW-0862">Zinc</keyword>
<keyword id="KW-0863">Zinc-finger</keyword>
<organism>
    <name type="scientific">Human immunodeficiency virus type 2 subtype A (isolate KR)</name>
    <name type="common">HIV-2</name>
    <dbReference type="NCBI Taxonomy" id="73484"/>
    <lineage>
        <taxon>Viruses</taxon>
        <taxon>Riboviria</taxon>
        <taxon>Pararnavirae</taxon>
        <taxon>Artverviricota</taxon>
        <taxon>Revtraviricetes</taxon>
        <taxon>Ortervirales</taxon>
        <taxon>Retroviridae</taxon>
        <taxon>Orthoretrovirinae</taxon>
        <taxon>Lentivirus</taxon>
        <taxon>Human immunodeficiency virus 2</taxon>
    </lineage>
</organism>